<feature type="chain" id="PRO_0000086398" description="Serine/threonine-protein kinase MRCK gamma">
    <location>
        <begin position="1"/>
        <end position="1551"/>
    </location>
</feature>
<feature type="domain" description="Protein kinase" evidence="4 8">
    <location>
        <begin position="71"/>
        <end position="337"/>
    </location>
</feature>
<feature type="domain" description="AGC-kinase C-terminal" evidence="10">
    <location>
        <begin position="338"/>
        <end position="408"/>
    </location>
</feature>
<feature type="domain" description="PH" evidence="7">
    <location>
        <begin position="946"/>
        <end position="1065"/>
    </location>
</feature>
<feature type="domain" description="CNH" evidence="11">
    <location>
        <begin position="1091"/>
        <end position="1365"/>
    </location>
</feature>
<feature type="domain" description="CRIB" evidence="6">
    <location>
        <begin position="1436"/>
        <end position="1449"/>
    </location>
</feature>
<feature type="zinc finger region" description="Phorbol-ester/DAG-type" evidence="9">
    <location>
        <begin position="877"/>
        <end position="926"/>
    </location>
</feature>
<feature type="region of interest" description="Disordered" evidence="13">
    <location>
        <begin position="578"/>
        <end position="605"/>
    </location>
</feature>
<feature type="region of interest" description="Disordered" evidence="13">
    <location>
        <begin position="820"/>
        <end position="886"/>
    </location>
</feature>
<feature type="region of interest" description="Disordered" evidence="13">
    <location>
        <begin position="1441"/>
        <end position="1551"/>
    </location>
</feature>
<feature type="coiled-coil region" evidence="5">
    <location>
        <begin position="442"/>
        <end position="675"/>
    </location>
</feature>
<feature type="coiled-coil region" evidence="5">
    <location>
        <begin position="729"/>
        <end position="801"/>
    </location>
</feature>
<feature type="compositionally biased region" description="Basic and acidic residues" evidence="13">
    <location>
        <begin position="839"/>
        <end position="849"/>
    </location>
</feature>
<feature type="compositionally biased region" description="Basic and acidic residues" evidence="13">
    <location>
        <begin position="1455"/>
        <end position="1468"/>
    </location>
</feature>
<feature type="compositionally biased region" description="Polar residues" evidence="13">
    <location>
        <begin position="1511"/>
        <end position="1527"/>
    </location>
</feature>
<feature type="active site" description="Proton acceptor" evidence="2 8 12">
    <location>
        <position position="195"/>
    </location>
</feature>
<feature type="binding site" evidence="2 8">
    <location>
        <begin position="77"/>
        <end position="85"/>
    </location>
    <ligand>
        <name>ATP</name>
        <dbReference type="ChEBI" id="CHEBI:30616"/>
    </ligand>
</feature>
<feature type="binding site" evidence="4 8">
    <location>
        <position position="100"/>
    </location>
    <ligand>
        <name>ATP</name>
        <dbReference type="ChEBI" id="CHEBI:30616"/>
    </ligand>
</feature>
<feature type="modified residue" description="Phosphoserine; by autocatalysis" evidence="1">
    <location>
        <position position="216"/>
    </location>
</feature>
<feature type="modified residue" description="Phosphoserine; by autocatalysis" evidence="1">
    <location>
        <position position="228"/>
    </location>
</feature>
<feature type="modified residue" description="Phosphothreonine; by autocatalysis" evidence="1">
    <location>
        <position position="234"/>
    </location>
</feature>
<feature type="modified residue" description="Phosphoserine" evidence="4">
    <location>
        <position position="1481"/>
    </location>
</feature>
<feature type="sequence conflict" description="In Ref. 2; AAH46418." evidence="14" ref="2">
    <original>R</original>
    <variation>Q</variation>
    <location>
        <position position="1065"/>
    </location>
</feature>
<gene>
    <name evidence="16" type="primary">Cdc42bpg</name>
</gene>
<comment type="function">
    <text evidence="3">May act as a downstream effector of CDC42 in cytoskeletal reorganization. Contributes to the actomyosin contractility required for cell invasion, through the regulation of MYPT1 and thus MLC2 phosphorylation (By similarity).</text>
</comment>
<comment type="catalytic activity">
    <reaction evidence="4">
        <text>L-seryl-[protein] + ATP = O-phospho-L-seryl-[protein] + ADP + H(+)</text>
        <dbReference type="Rhea" id="RHEA:17989"/>
        <dbReference type="Rhea" id="RHEA-COMP:9863"/>
        <dbReference type="Rhea" id="RHEA-COMP:11604"/>
        <dbReference type="ChEBI" id="CHEBI:15378"/>
        <dbReference type="ChEBI" id="CHEBI:29999"/>
        <dbReference type="ChEBI" id="CHEBI:30616"/>
        <dbReference type="ChEBI" id="CHEBI:83421"/>
        <dbReference type="ChEBI" id="CHEBI:456216"/>
        <dbReference type="EC" id="2.7.11.1"/>
    </reaction>
</comment>
<comment type="catalytic activity">
    <reaction evidence="4">
        <text>L-threonyl-[protein] + ATP = O-phospho-L-threonyl-[protein] + ADP + H(+)</text>
        <dbReference type="Rhea" id="RHEA:46608"/>
        <dbReference type="Rhea" id="RHEA-COMP:11060"/>
        <dbReference type="Rhea" id="RHEA-COMP:11605"/>
        <dbReference type="ChEBI" id="CHEBI:15378"/>
        <dbReference type="ChEBI" id="CHEBI:30013"/>
        <dbReference type="ChEBI" id="CHEBI:30616"/>
        <dbReference type="ChEBI" id="CHEBI:61977"/>
        <dbReference type="ChEBI" id="CHEBI:456216"/>
        <dbReference type="EC" id="2.7.11.1"/>
    </reaction>
</comment>
<comment type="cofactor">
    <cofactor evidence="4">
        <name>Mg(2+)</name>
        <dbReference type="ChEBI" id="CHEBI:18420"/>
    </cofactor>
</comment>
<comment type="activity regulation">
    <text evidence="3">Maintained in an inactive, closed conformation by an interaction between the kinase domain and the negative autoregulatory C-terminal coiled-coil region. Agonist binding to the phorbol ester binding site disrupts this, releasing the kinase domain to allow N-terminus-mediated dimerization and kinase activation by transautophosphorylation (By similarity).</text>
</comment>
<comment type="subunit">
    <text evidence="1">Homodimer and homotetramer via the coiled coil regions. Interacts tightly with GTP-bound but not GDP-bound CDC42 (By similarity).</text>
</comment>
<comment type="subcellular location">
    <subcellularLocation>
        <location evidence="1">Cytoplasm</location>
    </subcellularLocation>
    <text evidence="1">Concentrates at the leading edge of cells.</text>
</comment>
<comment type="similarity">
    <text evidence="14">Belongs to the protein kinase superfamily. AGC Ser/Thr protein kinase family. DMPK subfamily.</text>
</comment>
<proteinExistence type="evidence at protein level"/>
<dbReference type="EC" id="2.7.11.1"/>
<dbReference type="EMBL" id="AC127556">
    <property type="status" value="NOT_ANNOTATED_CDS"/>
    <property type="molecule type" value="Genomic_DNA"/>
</dbReference>
<dbReference type="EMBL" id="BC046418">
    <property type="protein sequence ID" value="AAH46418.1"/>
    <property type="molecule type" value="mRNA"/>
</dbReference>
<dbReference type="CCDS" id="CCDS50365.1"/>
<dbReference type="RefSeq" id="NP_001028514.1">
    <property type="nucleotide sequence ID" value="NM_001033342.1"/>
</dbReference>
<dbReference type="SMR" id="Q80UW5"/>
<dbReference type="BioGRID" id="232205">
    <property type="interactions" value="2"/>
</dbReference>
<dbReference type="FunCoup" id="Q80UW5">
    <property type="interactions" value="50"/>
</dbReference>
<dbReference type="IntAct" id="Q80UW5">
    <property type="interactions" value="1"/>
</dbReference>
<dbReference type="STRING" id="10090.ENSMUSP00000025681"/>
<dbReference type="GlyGen" id="Q80UW5">
    <property type="glycosylation" value="1 site"/>
</dbReference>
<dbReference type="iPTMnet" id="Q80UW5"/>
<dbReference type="PhosphoSitePlus" id="Q80UW5"/>
<dbReference type="jPOST" id="Q80UW5"/>
<dbReference type="PaxDb" id="10090-ENSMUSP00000025681"/>
<dbReference type="PeptideAtlas" id="Q80UW5"/>
<dbReference type="ProteomicsDB" id="295654"/>
<dbReference type="Antibodypedia" id="15651">
    <property type="antibodies" value="40 antibodies from 15 providers"/>
</dbReference>
<dbReference type="DNASU" id="240505"/>
<dbReference type="Ensembl" id="ENSMUST00000025681.8">
    <property type="protein sequence ID" value="ENSMUSP00000025681.8"/>
    <property type="gene ID" value="ENSMUSG00000024769.8"/>
</dbReference>
<dbReference type="GeneID" id="240505"/>
<dbReference type="KEGG" id="mmu:240505"/>
<dbReference type="UCSC" id="uc008gia.2">
    <property type="organism name" value="mouse"/>
</dbReference>
<dbReference type="AGR" id="MGI:2652845"/>
<dbReference type="CTD" id="55561"/>
<dbReference type="MGI" id="MGI:2652845">
    <property type="gene designation" value="Cdc42bpg"/>
</dbReference>
<dbReference type="VEuPathDB" id="HostDB:ENSMUSG00000024769"/>
<dbReference type="eggNOG" id="KOG0612">
    <property type="taxonomic scope" value="Eukaryota"/>
</dbReference>
<dbReference type="GeneTree" id="ENSGT01030000234517"/>
<dbReference type="HOGENOM" id="CLU_000288_140_1_1"/>
<dbReference type="InParanoid" id="Q80UW5"/>
<dbReference type="OMA" id="PWQHRIR"/>
<dbReference type="OrthoDB" id="2156623at2759"/>
<dbReference type="PhylomeDB" id="Q80UW5"/>
<dbReference type="TreeFam" id="TF313551"/>
<dbReference type="BioGRID-ORCS" id="240505">
    <property type="hits" value="6 hits in 82 CRISPR screens"/>
</dbReference>
<dbReference type="ChiTaRS" id="Cdc42bpg">
    <property type="organism name" value="mouse"/>
</dbReference>
<dbReference type="PRO" id="PR:Q80UW5"/>
<dbReference type="Proteomes" id="UP000000589">
    <property type="component" value="Chromosome 19"/>
</dbReference>
<dbReference type="RNAct" id="Q80UW5">
    <property type="molecule type" value="protein"/>
</dbReference>
<dbReference type="Bgee" id="ENSMUSG00000024769">
    <property type="expression patterns" value="Expressed in lip and 62 other cell types or tissues"/>
</dbReference>
<dbReference type="GO" id="GO:0031252">
    <property type="term" value="C:cell leading edge"/>
    <property type="evidence" value="ECO:0000250"/>
    <property type="project" value="UniProtKB"/>
</dbReference>
<dbReference type="GO" id="GO:0034451">
    <property type="term" value="C:centriolar satellite"/>
    <property type="evidence" value="ECO:0007669"/>
    <property type="project" value="Ensembl"/>
</dbReference>
<dbReference type="GO" id="GO:0005829">
    <property type="term" value="C:cytosol"/>
    <property type="evidence" value="ECO:0007669"/>
    <property type="project" value="Ensembl"/>
</dbReference>
<dbReference type="GO" id="GO:0005524">
    <property type="term" value="F:ATP binding"/>
    <property type="evidence" value="ECO:0000250"/>
    <property type="project" value="UniProtKB"/>
</dbReference>
<dbReference type="GO" id="GO:0000287">
    <property type="term" value="F:magnesium ion binding"/>
    <property type="evidence" value="ECO:0000250"/>
    <property type="project" value="UniProtKB"/>
</dbReference>
<dbReference type="GO" id="GO:0106310">
    <property type="term" value="F:protein serine kinase activity"/>
    <property type="evidence" value="ECO:0007669"/>
    <property type="project" value="RHEA"/>
</dbReference>
<dbReference type="GO" id="GO:0004674">
    <property type="term" value="F:protein serine/threonine kinase activity"/>
    <property type="evidence" value="ECO:0000250"/>
    <property type="project" value="UniProtKB"/>
</dbReference>
<dbReference type="GO" id="GO:0008270">
    <property type="term" value="F:zinc ion binding"/>
    <property type="evidence" value="ECO:0007669"/>
    <property type="project" value="UniProtKB-KW"/>
</dbReference>
<dbReference type="GO" id="GO:0030036">
    <property type="term" value="P:actin cytoskeleton organization"/>
    <property type="evidence" value="ECO:0000250"/>
    <property type="project" value="UniProtKB"/>
</dbReference>
<dbReference type="GO" id="GO:0006468">
    <property type="term" value="P:protein phosphorylation"/>
    <property type="evidence" value="ECO:0000250"/>
    <property type="project" value="UniProtKB"/>
</dbReference>
<dbReference type="CDD" id="cd20866">
    <property type="entry name" value="C1_MRCKgamma"/>
    <property type="match status" value="1"/>
</dbReference>
<dbReference type="CDD" id="cd01243">
    <property type="entry name" value="PH_MRCK"/>
    <property type="match status" value="1"/>
</dbReference>
<dbReference type="CDD" id="cd05597">
    <property type="entry name" value="STKc_DMPK_like"/>
    <property type="match status" value="1"/>
</dbReference>
<dbReference type="FunFam" id="1.20.5.340:FF:000031">
    <property type="entry name" value="CDC42 binding protein kinase gamma"/>
    <property type="match status" value="1"/>
</dbReference>
<dbReference type="FunFam" id="1.10.510.10:FF:000014">
    <property type="entry name" value="Non-specific serine/threonine protein kinase"/>
    <property type="match status" value="1"/>
</dbReference>
<dbReference type="FunFam" id="3.30.200.20:FF:000017">
    <property type="entry name" value="Non-specific serine/threonine protein kinase"/>
    <property type="match status" value="1"/>
</dbReference>
<dbReference type="FunFam" id="2.30.29.30:FF:000242">
    <property type="entry name" value="serine/threonine-protein kinase MRCK gamma isoform X1"/>
    <property type="match status" value="1"/>
</dbReference>
<dbReference type="FunFam" id="3.30.60.20:FF:000049">
    <property type="entry name" value="serine/threonine-protein kinase MRCK gamma isoform X2"/>
    <property type="match status" value="1"/>
</dbReference>
<dbReference type="Gene3D" id="1.20.5.340">
    <property type="match status" value="1"/>
</dbReference>
<dbReference type="Gene3D" id="3.30.60.20">
    <property type="match status" value="1"/>
</dbReference>
<dbReference type="Gene3D" id="3.30.200.20">
    <property type="entry name" value="Phosphorylase Kinase, domain 1"/>
    <property type="match status" value="1"/>
</dbReference>
<dbReference type="Gene3D" id="2.30.29.30">
    <property type="entry name" value="Pleckstrin-homology domain (PH domain)/Phosphotyrosine-binding domain (PTB)"/>
    <property type="match status" value="1"/>
</dbReference>
<dbReference type="Gene3D" id="1.10.510.10">
    <property type="entry name" value="Transferase(Phosphotransferase) domain 1"/>
    <property type="match status" value="1"/>
</dbReference>
<dbReference type="InterPro" id="IPR000961">
    <property type="entry name" value="AGC-kinase_C"/>
</dbReference>
<dbReference type="InterPro" id="IPR046349">
    <property type="entry name" value="C1-like_sf"/>
</dbReference>
<dbReference type="InterPro" id="IPR001180">
    <property type="entry name" value="CNH_dom"/>
</dbReference>
<dbReference type="InterPro" id="IPR000095">
    <property type="entry name" value="CRIB_dom"/>
</dbReference>
<dbReference type="InterPro" id="IPR011009">
    <property type="entry name" value="Kinase-like_dom_sf"/>
</dbReference>
<dbReference type="InterPro" id="IPR014930">
    <property type="entry name" value="Myotonic_dystrophy_kinase_coil"/>
</dbReference>
<dbReference type="InterPro" id="IPR002219">
    <property type="entry name" value="PE/DAG-bd"/>
</dbReference>
<dbReference type="InterPro" id="IPR011993">
    <property type="entry name" value="PH-like_dom_sf"/>
</dbReference>
<dbReference type="InterPro" id="IPR001849">
    <property type="entry name" value="PH_domain"/>
</dbReference>
<dbReference type="InterPro" id="IPR017892">
    <property type="entry name" value="Pkinase_C"/>
</dbReference>
<dbReference type="InterPro" id="IPR000719">
    <property type="entry name" value="Prot_kinase_dom"/>
</dbReference>
<dbReference type="InterPro" id="IPR017441">
    <property type="entry name" value="Protein_kinase_ATP_BS"/>
</dbReference>
<dbReference type="InterPro" id="IPR050839">
    <property type="entry name" value="Rho-assoc_Ser/Thr_Kinase"/>
</dbReference>
<dbReference type="InterPro" id="IPR008271">
    <property type="entry name" value="Ser/Thr_kinase_AS"/>
</dbReference>
<dbReference type="PANTHER" id="PTHR22988">
    <property type="entry name" value="MYOTONIC DYSTROPHY S/T KINASE-RELATED"/>
    <property type="match status" value="1"/>
</dbReference>
<dbReference type="PANTHER" id="PTHR22988:SF22">
    <property type="entry name" value="SERINE_THREONINE-PROTEIN KINASE MRCK GAMMA"/>
    <property type="match status" value="1"/>
</dbReference>
<dbReference type="Pfam" id="PF00130">
    <property type="entry name" value="C1_1"/>
    <property type="match status" value="1"/>
</dbReference>
<dbReference type="Pfam" id="PF00780">
    <property type="entry name" value="CNH"/>
    <property type="match status" value="1"/>
</dbReference>
<dbReference type="Pfam" id="PF08826">
    <property type="entry name" value="DMPK_coil"/>
    <property type="match status" value="1"/>
</dbReference>
<dbReference type="Pfam" id="PF25346">
    <property type="entry name" value="PH_MRCK"/>
    <property type="match status" value="1"/>
</dbReference>
<dbReference type="Pfam" id="PF00069">
    <property type="entry name" value="Pkinase"/>
    <property type="match status" value="1"/>
</dbReference>
<dbReference type="Pfam" id="PF00433">
    <property type="entry name" value="Pkinase_C"/>
    <property type="match status" value="1"/>
</dbReference>
<dbReference type="SMART" id="SM00109">
    <property type="entry name" value="C1"/>
    <property type="match status" value="1"/>
</dbReference>
<dbReference type="SMART" id="SM00036">
    <property type="entry name" value="CNH"/>
    <property type="match status" value="1"/>
</dbReference>
<dbReference type="SMART" id="SM00285">
    <property type="entry name" value="PBD"/>
    <property type="match status" value="1"/>
</dbReference>
<dbReference type="SMART" id="SM00233">
    <property type="entry name" value="PH"/>
    <property type="match status" value="1"/>
</dbReference>
<dbReference type="SMART" id="SM00133">
    <property type="entry name" value="S_TK_X"/>
    <property type="match status" value="1"/>
</dbReference>
<dbReference type="SMART" id="SM00220">
    <property type="entry name" value="S_TKc"/>
    <property type="match status" value="1"/>
</dbReference>
<dbReference type="SUPFAM" id="SSF57889">
    <property type="entry name" value="Cysteine-rich domain"/>
    <property type="match status" value="1"/>
</dbReference>
<dbReference type="SUPFAM" id="SSF50729">
    <property type="entry name" value="PH domain-like"/>
    <property type="match status" value="1"/>
</dbReference>
<dbReference type="SUPFAM" id="SSF56112">
    <property type="entry name" value="Protein kinase-like (PK-like)"/>
    <property type="match status" value="1"/>
</dbReference>
<dbReference type="PROSITE" id="PS51285">
    <property type="entry name" value="AGC_KINASE_CTER"/>
    <property type="match status" value="1"/>
</dbReference>
<dbReference type="PROSITE" id="PS50219">
    <property type="entry name" value="CNH"/>
    <property type="match status" value="1"/>
</dbReference>
<dbReference type="PROSITE" id="PS50108">
    <property type="entry name" value="CRIB"/>
    <property type="match status" value="1"/>
</dbReference>
<dbReference type="PROSITE" id="PS50003">
    <property type="entry name" value="PH_DOMAIN"/>
    <property type="match status" value="1"/>
</dbReference>
<dbReference type="PROSITE" id="PS00107">
    <property type="entry name" value="PROTEIN_KINASE_ATP"/>
    <property type="match status" value="1"/>
</dbReference>
<dbReference type="PROSITE" id="PS50011">
    <property type="entry name" value="PROTEIN_KINASE_DOM"/>
    <property type="match status" value="1"/>
</dbReference>
<dbReference type="PROSITE" id="PS00108">
    <property type="entry name" value="PROTEIN_KINASE_ST"/>
    <property type="match status" value="1"/>
</dbReference>
<dbReference type="PROSITE" id="PS00479">
    <property type="entry name" value="ZF_DAG_PE_1"/>
    <property type="match status" value="1"/>
</dbReference>
<dbReference type="PROSITE" id="PS50081">
    <property type="entry name" value="ZF_DAG_PE_2"/>
    <property type="match status" value="1"/>
</dbReference>
<accession>Q80UW5</accession>
<reference key="1">
    <citation type="journal article" date="2009" name="PLoS Biol.">
        <title>Lineage-specific biology revealed by a finished genome assembly of the mouse.</title>
        <authorList>
            <person name="Church D.M."/>
            <person name="Goodstadt L."/>
            <person name="Hillier L.W."/>
            <person name="Zody M.C."/>
            <person name="Goldstein S."/>
            <person name="She X."/>
            <person name="Bult C.J."/>
            <person name="Agarwala R."/>
            <person name="Cherry J.L."/>
            <person name="DiCuccio M."/>
            <person name="Hlavina W."/>
            <person name="Kapustin Y."/>
            <person name="Meric P."/>
            <person name="Maglott D."/>
            <person name="Birtle Z."/>
            <person name="Marques A.C."/>
            <person name="Graves T."/>
            <person name="Zhou S."/>
            <person name="Teague B."/>
            <person name="Potamousis K."/>
            <person name="Churas C."/>
            <person name="Place M."/>
            <person name="Herschleb J."/>
            <person name="Runnheim R."/>
            <person name="Forrest D."/>
            <person name="Amos-Landgraf J."/>
            <person name="Schwartz D.C."/>
            <person name="Cheng Z."/>
            <person name="Lindblad-Toh K."/>
            <person name="Eichler E.E."/>
            <person name="Ponting C.P."/>
        </authorList>
    </citation>
    <scope>NUCLEOTIDE SEQUENCE [LARGE SCALE GENOMIC DNA]</scope>
    <source>
        <strain>C57BL/6J</strain>
    </source>
</reference>
<reference evidence="14 15" key="2">
    <citation type="journal article" date="2004" name="Genome Res.">
        <title>The status, quality, and expansion of the NIH full-length cDNA project: the Mammalian Gene Collection (MGC).</title>
        <authorList>
            <consortium name="The MGC Project Team"/>
        </authorList>
    </citation>
    <scope>NUCLEOTIDE SEQUENCE [LARGE SCALE MRNA] OF 699-1551</scope>
    <source>
        <strain evidence="15">FVB/N</strain>
        <tissue evidence="15">Mammary gland</tissue>
    </source>
</reference>
<reference key="3">
    <citation type="journal article" date="2010" name="Cell">
        <title>A tissue-specific atlas of mouse protein phosphorylation and expression.</title>
        <authorList>
            <person name="Huttlin E.L."/>
            <person name="Jedrychowski M.P."/>
            <person name="Elias J.E."/>
            <person name="Goswami T."/>
            <person name="Rad R."/>
            <person name="Beausoleil S.A."/>
            <person name="Villen J."/>
            <person name="Haas W."/>
            <person name="Sowa M.E."/>
            <person name="Gygi S.P."/>
        </authorList>
    </citation>
    <scope>IDENTIFICATION BY MASS SPECTROMETRY [LARGE SCALE ANALYSIS]</scope>
    <source>
        <tissue>Kidney</tissue>
        <tissue>Lung</tissue>
        <tissue>Pancreas</tissue>
    </source>
</reference>
<sequence length="1551" mass="172147">MEQRLRALEQLVRGEAGGSPGLDGLLDLLLGVHQELSSAPLRRERNVAQFLSWASPFVTKVKELRLQRDDFEILKVIGRGAFGEVAVVRQRGSGQIFAMKMLHKWEMLKRAETACFREERDVLVKGDSRWVTALHYAFQDEEYLYLVMDYYAGGDLLTLLSRFEDRLPPELAQFYLAEMVLAIHSLHQLGYVHRDVKPDNILLDMNGHIRLADFGSCLRLNNNGMVDSSVAVGTPDYISPEILQAMEEGKGHYGPQCDWWSLGVCAYELLFGETPFYAESLVETYGKIMNHEDHLQFPADVTDVPASAQDLIRQLLCRQEERLGRGGLDDFRKHPFFEGVDWERLATSTAPYIPELRGPMDTSNFDVDDDTLNRPETLPPSSHGAFSGHHLPFVGFTYTSGSPFDVQSSELMAAPEGTPHCVEQVKVELSHKCQEPLHGPLQPQELVRLQKEVQVLQEKLAETLRDSKASLSQTDGLHARSPAPNIQLQQEKDRLQQELTEAQAALRVQDAELCQAQNRQEEFLQRLWEAQEREAAAASQIQALNSQLEEAWVVRRELEGQVTTLSQEVTRLQGQCKQESSQAKTVHAAPETNGIGSPEGQSQEAQLRKEVAALREQLEHACSQGISVGKEEVLCRLQEENQRLSREQERLAGELELELQSKQRLEGERRETESNWEAQIADILSWVNDEKVSRGYLQALATKMAEELESLRNVGTQTLPTRPLDHQWKARRLQKMEASARLELQSALEAEIRAKQSLQEQLTQVQEAQRQAERRLQEAEKQSQALQQEVAELREELQARGPGDARPSTSLIPLLSFWNTEKDSAKDPGNSGEGPRSGAEAELRPEGRRSLRMGSVFPRVPAATTTPAEGPPAKPGSHTLRPRSFPSPTKCLRCTSLMLGLGRQGLGCDTCGYFCHSACASQAPPCPVPPELLRTALGVHPETGTGTAYEGFLSVPRPSGVRRGWQRVYAALSDSRLLLFDAPDPRGSLASGVLLQALDLRDPQFSATPVLAPDVIHAQSKDLPRIFRVTASQLTVPPTTCTVLLLAENEGERERWLQVLGELQRLLLDARPRPRPVYTLKEAYDNGLPLLPHALCAAVIDQERLALGTEEGLFVIHLHSNDIFQVGDCRRVQRLAVSSAAGLLAVLCGRGPSVRLFALDELESAEVAGAKIPESRGCQALVAGRILQARTPVLCVAVKRQVLCYQLGPGPGPWQRRIRELQAPAPVQSLGLLGDRLCVGAAGTFALYPLLNEAAPLALGTGLVAEELPASRGGLGEALGAVELSLSELLLLFATAGVYVDSAGRKSRSHELLWPAAPTGWGYTAPYLTVFSENALDVFDVRRAEWVQTVPLKKVRPLNPEGSLFLYGTEKVRLTYLRNPLAEKDEFDIPDLTDNSRRQLFRTKSKRRFFFRVSDELRQQQRREMLKDPFVRSKFISPPTNFNHLVHVGPTEGRPNTRDGTRAQEQKSRGARSSGPQRPHSFSEAFRRPVSTGSDGLPGETDPLVKRKPWTSLSSESVSCPQGSLSPAASLIQVSERPRSLPPDPESESSP</sequence>
<name>MRCKG_MOUSE</name>
<organism>
    <name type="scientific">Mus musculus</name>
    <name type="common">Mouse</name>
    <dbReference type="NCBI Taxonomy" id="10090"/>
    <lineage>
        <taxon>Eukaryota</taxon>
        <taxon>Metazoa</taxon>
        <taxon>Chordata</taxon>
        <taxon>Craniata</taxon>
        <taxon>Vertebrata</taxon>
        <taxon>Euteleostomi</taxon>
        <taxon>Mammalia</taxon>
        <taxon>Eutheria</taxon>
        <taxon>Euarchontoglires</taxon>
        <taxon>Glires</taxon>
        <taxon>Rodentia</taxon>
        <taxon>Myomorpha</taxon>
        <taxon>Muroidea</taxon>
        <taxon>Muridae</taxon>
        <taxon>Murinae</taxon>
        <taxon>Mus</taxon>
        <taxon>Mus</taxon>
    </lineage>
</organism>
<evidence type="ECO:0000250" key="1"/>
<evidence type="ECO:0000250" key="2">
    <source>
        <dbReference type="UniProtKB" id="P54265"/>
    </source>
</evidence>
<evidence type="ECO:0000250" key="3">
    <source>
        <dbReference type="UniProtKB" id="Q5VT25"/>
    </source>
</evidence>
<evidence type="ECO:0000250" key="4">
    <source>
        <dbReference type="UniProtKB" id="Q6DT37"/>
    </source>
</evidence>
<evidence type="ECO:0000255" key="5"/>
<evidence type="ECO:0000255" key="6">
    <source>
        <dbReference type="PROSITE-ProRule" id="PRU00057"/>
    </source>
</evidence>
<evidence type="ECO:0000255" key="7">
    <source>
        <dbReference type="PROSITE-ProRule" id="PRU00145"/>
    </source>
</evidence>
<evidence type="ECO:0000255" key="8">
    <source>
        <dbReference type="PROSITE-ProRule" id="PRU00159"/>
    </source>
</evidence>
<evidence type="ECO:0000255" key="9">
    <source>
        <dbReference type="PROSITE-ProRule" id="PRU00226"/>
    </source>
</evidence>
<evidence type="ECO:0000255" key="10">
    <source>
        <dbReference type="PROSITE-ProRule" id="PRU00618"/>
    </source>
</evidence>
<evidence type="ECO:0000255" key="11">
    <source>
        <dbReference type="PROSITE-ProRule" id="PRU00795"/>
    </source>
</evidence>
<evidence type="ECO:0000255" key="12">
    <source>
        <dbReference type="PROSITE-ProRule" id="PRU10027"/>
    </source>
</evidence>
<evidence type="ECO:0000256" key="13">
    <source>
        <dbReference type="SAM" id="MobiDB-lite"/>
    </source>
</evidence>
<evidence type="ECO:0000305" key="14"/>
<evidence type="ECO:0000312" key="15">
    <source>
        <dbReference type="EMBL" id="AAH46418.1"/>
    </source>
</evidence>
<evidence type="ECO:0000312" key="16">
    <source>
        <dbReference type="MGI" id="MGI:2652845"/>
    </source>
</evidence>
<keyword id="KW-0067">ATP-binding</keyword>
<keyword id="KW-0175">Coiled coil</keyword>
<keyword id="KW-0963">Cytoplasm</keyword>
<keyword id="KW-0418">Kinase</keyword>
<keyword id="KW-0460">Magnesium</keyword>
<keyword id="KW-0479">Metal-binding</keyword>
<keyword id="KW-0547">Nucleotide-binding</keyword>
<keyword id="KW-0597">Phosphoprotein</keyword>
<keyword id="KW-1185">Reference proteome</keyword>
<keyword id="KW-0677">Repeat</keyword>
<keyword id="KW-0723">Serine/threonine-protein kinase</keyword>
<keyword id="KW-0808">Transferase</keyword>
<keyword id="KW-0862">Zinc</keyword>
<keyword id="KW-0863">Zinc-finger</keyword>
<protein>
    <recommendedName>
        <fullName>Serine/threonine-protein kinase MRCK gamma</fullName>
        <ecNumber>2.7.11.1</ecNumber>
    </recommendedName>
    <alternativeName>
        <fullName>CDC42-binding protein kinase gamma</fullName>
    </alternativeName>
    <alternativeName>
        <fullName>DMPK-like gamma</fullName>
    </alternativeName>
    <alternativeName>
        <fullName>Myotonic dystrophy kinase-related CDC42-binding kinase gamma</fullName>
        <shortName>MRCK gamma</shortName>
        <shortName>Myotonic dystrophy protein kinase-like gamma</shortName>
    </alternativeName>
    <alternativeName>
        <fullName>Myotonic dystrophy protein kinase-like alpha</fullName>
    </alternativeName>
</protein>